<feature type="chain" id="PRO_0000094125" description="Alpha-2-antiplasmin">
    <location>
        <begin position="1"/>
        <end position="11" status="greater than"/>
    </location>
</feature>
<feature type="non-terminal residue" evidence="4">
    <location>
        <position position="11"/>
    </location>
</feature>
<sequence length="11" mass="1261">LQVDYLVLEVA</sequence>
<comment type="function">
    <text evidence="3">Serine protease inhibitor. The major targets of this inhibitor are plasmin and trypsin, but it also inactivates matriptase-3/TMPRSS7 and chymotrypsin.</text>
</comment>
<comment type="subunit">
    <text evidence="1">Forms protease inhibiting heterodimer with TMPRSS7.</text>
</comment>
<comment type="subcellular location">
    <subcellularLocation>
        <location>Secreted</location>
    </subcellularLocation>
</comment>
<comment type="similarity">
    <text evidence="2">Belongs to the serpin family.</text>
</comment>
<evidence type="ECO:0000250" key="1"/>
<evidence type="ECO:0000255" key="2"/>
<evidence type="ECO:0000269" key="3">
    <source>
    </source>
</evidence>
<evidence type="ECO:0000303" key="4">
    <source>
    </source>
</evidence>
<evidence type="ECO:0000305" key="5"/>
<gene>
    <name type="primary">SERPINF2</name>
</gene>
<organism>
    <name type="scientific">Struthio camelus</name>
    <name type="common">Common ostrich</name>
    <dbReference type="NCBI Taxonomy" id="8801"/>
    <lineage>
        <taxon>Eukaryota</taxon>
        <taxon>Metazoa</taxon>
        <taxon>Chordata</taxon>
        <taxon>Craniata</taxon>
        <taxon>Vertebrata</taxon>
        <taxon>Euteleostomi</taxon>
        <taxon>Archelosauria</taxon>
        <taxon>Archosauria</taxon>
        <taxon>Dinosauria</taxon>
        <taxon>Saurischia</taxon>
        <taxon>Theropoda</taxon>
        <taxon>Coelurosauria</taxon>
        <taxon>Aves</taxon>
        <taxon>Palaeognathae</taxon>
        <taxon>Struthioniformes</taxon>
        <taxon>Struthionidae</taxon>
        <taxon>Struthio</taxon>
    </lineage>
</organism>
<accession>P83168</accession>
<protein>
    <recommendedName>
        <fullName>Alpha-2-antiplasmin</fullName>
        <shortName>Alpha-2-AP</shortName>
    </recommendedName>
    <alternativeName>
        <fullName>Alpha-2-plasmin inhibitor</fullName>
        <shortName>Alpha-2-PI</shortName>
    </alternativeName>
    <alternativeName>
        <fullName>Serpin F2</fullName>
    </alternativeName>
</protein>
<proteinExistence type="evidence at protein level"/>
<keyword id="KW-0903">Direct protein sequencing</keyword>
<keyword id="KW-0646">Protease inhibitor</keyword>
<keyword id="KW-0964">Secreted</keyword>
<keyword id="KW-0722">Serine protease inhibitor</keyword>
<name>A2AP_STRCA</name>
<dbReference type="GO" id="GO:0005576">
    <property type="term" value="C:extracellular region"/>
    <property type="evidence" value="ECO:0007669"/>
    <property type="project" value="UniProtKB-SubCell"/>
</dbReference>
<dbReference type="GO" id="GO:0004867">
    <property type="term" value="F:serine-type endopeptidase inhibitor activity"/>
    <property type="evidence" value="ECO:0000304"/>
    <property type="project" value="UniProtKB"/>
</dbReference>
<dbReference type="GO" id="GO:0030162">
    <property type="term" value="P:regulation of proteolysis"/>
    <property type="evidence" value="ECO:0000303"/>
    <property type="project" value="UniProtKB"/>
</dbReference>
<reference evidence="5" key="1">
    <citation type="journal article" date="2001" name="Comp. Biochem. Physiol.">
        <title>Purification and partial characterisation of alpha(2)-antiplasmin and plasmin(ogen) from ostrich plasma.</title>
        <authorList>
            <person name="Thomas A.R."/>
            <person name="Naude R.J."/>
            <person name="Oelofsen W."/>
            <person name="Naganuma T."/>
            <person name="Muramoto K."/>
        </authorList>
    </citation>
    <scope>PROTEIN SEQUENCE</scope>
    <scope>FUNCTION</scope>
    <source>
        <tissue evidence="3">Plasma</tissue>
    </source>
</reference>